<accession>A1RLL4</accession>
<feature type="chain" id="PRO_1000049421" description="Lipid-A-disaccharide synthase">
    <location>
        <begin position="1"/>
        <end position="384"/>
    </location>
</feature>
<keyword id="KW-0328">Glycosyltransferase</keyword>
<keyword id="KW-0441">Lipid A biosynthesis</keyword>
<keyword id="KW-0444">Lipid biosynthesis</keyword>
<keyword id="KW-0443">Lipid metabolism</keyword>
<keyword id="KW-0808">Transferase</keyword>
<dbReference type="EC" id="2.4.1.182" evidence="1"/>
<dbReference type="EMBL" id="CP000503">
    <property type="protein sequence ID" value="ABM25559.1"/>
    <property type="molecule type" value="Genomic_DNA"/>
</dbReference>
<dbReference type="RefSeq" id="WP_011790015.1">
    <property type="nucleotide sequence ID" value="NC_008750.1"/>
</dbReference>
<dbReference type="SMR" id="A1RLL4"/>
<dbReference type="CAZy" id="GT19">
    <property type="family name" value="Glycosyltransferase Family 19"/>
</dbReference>
<dbReference type="GeneID" id="67442881"/>
<dbReference type="KEGG" id="shw:Sputw3181_2742"/>
<dbReference type="HOGENOM" id="CLU_036577_3_0_6"/>
<dbReference type="UniPathway" id="UPA00973"/>
<dbReference type="Proteomes" id="UP000002597">
    <property type="component" value="Chromosome"/>
</dbReference>
<dbReference type="GO" id="GO:0016020">
    <property type="term" value="C:membrane"/>
    <property type="evidence" value="ECO:0007669"/>
    <property type="project" value="GOC"/>
</dbReference>
<dbReference type="GO" id="GO:0008915">
    <property type="term" value="F:lipid-A-disaccharide synthase activity"/>
    <property type="evidence" value="ECO:0007669"/>
    <property type="project" value="UniProtKB-UniRule"/>
</dbReference>
<dbReference type="GO" id="GO:0005543">
    <property type="term" value="F:phospholipid binding"/>
    <property type="evidence" value="ECO:0007669"/>
    <property type="project" value="TreeGrafter"/>
</dbReference>
<dbReference type="GO" id="GO:0009245">
    <property type="term" value="P:lipid A biosynthetic process"/>
    <property type="evidence" value="ECO:0007669"/>
    <property type="project" value="UniProtKB-UniRule"/>
</dbReference>
<dbReference type="CDD" id="cd01635">
    <property type="entry name" value="Glycosyltransferase_GTB-type"/>
    <property type="match status" value="1"/>
</dbReference>
<dbReference type="HAMAP" id="MF_00392">
    <property type="entry name" value="LpxB"/>
    <property type="match status" value="1"/>
</dbReference>
<dbReference type="InterPro" id="IPR003835">
    <property type="entry name" value="Glyco_trans_19"/>
</dbReference>
<dbReference type="NCBIfam" id="TIGR00215">
    <property type="entry name" value="lpxB"/>
    <property type="match status" value="1"/>
</dbReference>
<dbReference type="PANTHER" id="PTHR30372">
    <property type="entry name" value="LIPID-A-DISACCHARIDE SYNTHASE"/>
    <property type="match status" value="1"/>
</dbReference>
<dbReference type="PANTHER" id="PTHR30372:SF4">
    <property type="entry name" value="LIPID-A-DISACCHARIDE SYNTHASE, MITOCHONDRIAL-RELATED"/>
    <property type="match status" value="1"/>
</dbReference>
<dbReference type="Pfam" id="PF02684">
    <property type="entry name" value="LpxB"/>
    <property type="match status" value="1"/>
</dbReference>
<dbReference type="SUPFAM" id="SSF53756">
    <property type="entry name" value="UDP-Glycosyltransferase/glycogen phosphorylase"/>
    <property type="match status" value="1"/>
</dbReference>
<gene>
    <name evidence="1" type="primary">lpxB</name>
    <name type="ordered locus">Sputw3181_2742</name>
</gene>
<protein>
    <recommendedName>
        <fullName evidence="1">Lipid-A-disaccharide synthase</fullName>
        <ecNumber evidence="1">2.4.1.182</ecNumber>
    </recommendedName>
</protein>
<reference key="1">
    <citation type="submission" date="2006-12" db="EMBL/GenBank/DDBJ databases">
        <title>Complete sequence of Shewanella sp. W3-18-1.</title>
        <authorList>
            <consortium name="US DOE Joint Genome Institute"/>
            <person name="Copeland A."/>
            <person name="Lucas S."/>
            <person name="Lapidus A."/>
            <person name="Barry K."/>
            <person name="Detter J.C."/>
            <person name="Glavina del Rio T."/>
            <person name="Hammon N."/>
            <person name="Israni S."/>
            <person name="Dalin E."/>
            <person name="Tice H."/>
            <person name="Pitluck S."/>
            <person name="Chain P."/>
            <person name="Malfatti S."/>
            <person name="Shin M."/>
            <person name="Vergez L."/>
            <person name="Schmutz J."/>
            <person name="Larimer F."/>
            <person name="Land M."/>
            <person name="Hauser L."/>
            <person name="Kyrpides N."/>
            <person name="Lykidis A."/>
            <person name="Tiedje J."/>
            <person name="Richardson P."/>
        </authorList>
    </citation>
    <scope>NUCLEOTIDE SEQUENCE [LARGE SCALE GENOMIC DNA]</scope>
    <source>
        <strain>W3-18-1</strain>
    </source>
</reference>
<proteinExistence type="inferred from homology"/>
<comment type="function">
    <text evidence="1">Condensation of UDP-2,3-diacylglucosamine and 2,3-diacylglucosamine-1-phosphate to form lipid A disaccharide, a precursor of lipid A, a phosphorylated glycolipid that anchors the lipopolysaccharide to the outer membrane of the cell.</text>
</comment>
<comment type="catalytic activity">
    <reaction evidence="1">
        <text>a lipid X + a UDP-2-N,3-O-bis[(3R)-3-hydroxyacyl]-alpha-D-glucosamine = a lipid A disaccharide + UDP + H(+)</text>
        <dbReference type="Rhea" id="RHEA:67828"/>
        <dbReference type="ChEBI" id="CHEBI:15378"/>
        <dbReference type="ChEBI" id="CHEBI:58223"/>
        <dbReference type="ChEBI" id="CHEBI:137748"/>
        <dbReference type="ChEBI" id="CHEBI:176338"/>
        <dbReference type="ChEBI" id="CHEBI:176343"/>
        <dbReference type="EC" id="2.4.1.182"/>
    </reaction>
</comment>
<comment type="pathway">
    <text evidence="1">Bacterial outer membrane biogenesis; LPS lipid A biosynthesis.</text>
</comment>
<comment type="similarity">
    <text evidence="1">Belongs to the LpxB family.</text>
</comment>
<organism>
    <name type="scientific">Shewanella sp. (strain W3-18-1)</name>
    <dbReference type="NCBI Taxonomy" id="351745"/>
    <lineage>
        <taxon>Bacteria</taxon>
        <taxon>Pseudomonadati</taxon>
        <taxon>Pseudomonadota</taxon>
        <taxon>Gammaproteobacteria</taxon>
        <taxon>Alteromonadales</taxon>
        <taxon>Shewanellaceae</taxon>
        <taxon>Shewanella</taxon>
    </lineage>
</organism>
<evidence type="ECO:0000255" key="1">
    <source>
        <dbReference type="HAMAP-Rule" id="MF_00392"/>
    </source>
</evidence>
<sequence length="384" mass="42409">MSKKSQLVFAMVAGELSGDILGAGLMAALQKSHPDARFVGIGGPRMEALGFESLFAMEELAVMGIVEVLSRLPRLLKVRASLIKDITALKPDCFIGIDAPDFNIGLELKLKARGIKTVHYVSPSVWAWRPKRIFKIAKATHMVLSLLPFEKAFYDKHQVPCTFVGHTLADDIPLRSDKAAARQLLELDADAEYLAILPGSRGGELKQLAEPFVKAALLIKENFPDIRFVTPLVNQKRRDQFEQALKDHAPDLEIHMVEGKSREVMTAADGILLASGTATLEAMLVKRPMVVAYRVSPLTYRIAKSMMQVNRFSLPNLLAGKDVVPELIQDDCTPEKIAAAVTVELNRDFAPLNAEFERLHQMLRCDASQKAADAVMRLVETKEG</sequence>
<name>LPXB_SHESW</name>